<reference key="1">
    <citation type="journal article" date="1997" name="Proc. Natl. Acad. Sci. U.S.A.">
        <title>Complete nucleotide sequence of the chloroplast genome from the green alga Chlorella vulgaris: the existence of genes possibly involved in chloroplast division.</title>
        <authorList>
            <person name="Wakasugi T."/>
            <person name="Nagai T."/>
            <person name="Kapoor M."/>
            <person name="Sugita M."/>
            <person name="Ito M."/>
            <person name="Ito S."/>
            <person name="Tsudzuki J."/>
            <person name="Nakashima K."/>
            <person name="Tsudzuki T."/>
            <person name="Suzuki Y."/>
            <person name="Hamada A."/>
            <person name="Ohta T."/>
            <person name="Inamura A."/>
            <person name="Yoshinaga K."/>
            <person name="Sugiura M."/>
        </authorList>
    </citation>
    <scope>NUCLEOTIDE SEQUENCE [LARGE SCALE GENOMIC DNA]</scope>
    <source>
        <strain>IAM C-27 / Tamiya</strain>
    </source>
</reference>
<sequence length="267" mass="30700">MLQKVKLEDMIQSGMHFGHSTREWNPRMAPYIYGERNGRHILDLVQTYYLLNKVLAFLEEQAAQGKTFLFVGTKQQAAPLIAKTALACESFYVNQRWLGGMLTNWRTIQKSLRKLQEYRRAEERGDWNLLKKQEVARKRREKDRLEKYLSGVENMSRLPGVVILIGQTEEIHAVKECRQLGIPTVTLLDSNCDPNLADWFLPANDDSVSALRLILAWFQQAIQTGQLRSLEREAAKKQKIKKTGVKISGNRRTSSITKKRNPASSKI</sequence>
<evidence type="ECO:0000256" key="1">
    <source>
        <dbReference type="SAM" id="MobiDB-lite"/>
    </source>
</evidence>
<evidence type="ECO:0000305" key="2"/>
<keyword id="KW-0150">Chloroplast</keyword>
<keyword id="KW-0934">Plastid</keyword>
<keyword id="KW-0687">Ribonucleoprotein</keyword>
<keyword id="KW-0689">Ribosomal protein</keyword>
<name>RR2_CHLVU</name>
<comment type="subcellular location">
    <subcellularLocation>
        <location>Plastid</location>
        <location>Chloroplast</location>
    </subcellularLocation>
</comment>
<comment type="similarity">
    <text evidence="2">Belongs to the universal ribosomal protein uS2 family.</text>
</comment>
<protein>
    <recommendedName>
        <fullName evidence="2">Small ribosomal subunit protein uS2c</fullName>
    </recommendedName>
    <alternativeName>
        <fullName>30S ribosomal protein S2, chloroplastic</fullName>
    </alternativeName>
</protein>
<organism>
    <name type="scientific">Chlorella vulgaris</name>
    <name type="common">Green alga</name>
    <dbReference type="NCBI Taxonomy" id="3077"/>
    <lineage>
        <taxon>Eukaryota</taxon>
        <taxon>Viridiplantae</taxon>
        <taxon>Chlorophyta</taxon>
        <taxon>core chlorophytes</taxon>
        <taxon>Trebouxiophyceae</taxon>
        <taxon>Chlorellales</taxon>
        <taxon>Chlorellaceae</taxon>
        <taxon>Chlorella clade</taxon>
        <taxon>Chlorella</taxon>
    </lineage>
</organism>
<accession>P56351</accession>
<feature type="chain" id="PRO_0000134291" description="Small ribosomal subunit protein uS2c">
    <location>
        <begin position="1"/>
        <end position="267"/>
    </location>
</feature>
<feature type="region of interest" description="Disordered" evidence="1">
    <location>
        <begin position="237"/>
        <end position="267"/>
    </location>
</feature>
<feature type="compositionally biased region" description="Polar residues" evidence="1">
    <location>
        <begin position="250"/>
        <end position="267"/>
    </location>
</feature>
<gene>
    <name type="primary">rps2</name>
</gene>
<geneLocation type="chloroplast"/>
<proteinExistence type="inferred from homology"/>
<dbReference type="EMBL" id="AB001684">
    <property type="protein sequence ID" value="BAA57862.1"/>
    <property type="molecule type" value="Genomic_DNA"/>
</dbReference>
<dbReference type="PIR" id="T07215">
    <property type="entry name" value="T07215"/>
</dbReference>
<dbReference type="RefSeq" id="NP_045787.1">
    <property type="nucleotide sequence ID" value="NC_001865.1"/>
</dbReference>
<dbReference type="SMR" id="P56351"/>
<dbReference type="GeneID" id="809201"/>
<dbReference type="GO" id="GO:0009507">
    <property type="term" value="C:chloroplast"/>
    <property type="evidence" value="ECO:0007669"/>
    <property type="project" value="UniProtKB-SubCell"/>
</dbReference>
<dbReference type="GO" id="GO:0005763">
    <property type="term" value="C:mitochondrial small ribosomal subunit"/>
    <property type="evidence" value="ECO:0007669"/>
    <property type="project" value="TreeGrafter"/>
</dbReference>
<dbReference type="GO" id="GO:0003735">
    <property type="term" value="F:structural constituent of ribosome"/>
    <property type="evidence" value="ECO:0007669"/>
    <property type="project" value="InterPro"/>
</dbReference>
<dbReference type="GO" id="GO:0006412">
    <property type="term" value="P:translation"/>
    <property type="evidence" value="ECO:0007669"/>
    <property type="project" value="UniProtKB-UniRule"/>
</dbReference>
<dbReference type="CDD" id="cd01425">
    <property type="entry name" value="RPS2"/>
    <property type="match status" value="1"/>
</dbReference>
<dbReference type="Gene3D" id="3.40.50.10490">
    <property type="entry name" value="Glucose-6-phosphate isomerase like protein, domain 1"/>
    <property type="match status" value="1"/>
</dbReference>
<dbReference type="Gene3D" id="1.10.287.610">
    <property type="entry name" value="Helix hairpin bin"/>
    <property type="match status" value="1"/>
</dbReference>
<dbReference type="HAMAP" id="MF_00291_B">
    <property type="entry name" value="Ribosomal_uS2_B"/>
    <property type="match status" value="1"/>
</dbReference>
<dbReference type="InterPro" id="IPR001865">
    <property type="entry name" value="Ribosomal_uS2"/>
</dbReference>
<dbReference type="InterPro" id="IPR005706">
    <property type="entry name" value="Ribosomal_uS2_bac/mit/plastid"/>
</dbReference>
<dbReference type="InterPro" id="IPR018130">
    <property type="entry name" value="Ribosomal_uS2_CS"/>
</dbReference>
<dbReference type="InterPro" id="IPR023591">
    <property type="entry name" value="Ribosomal_uS2_flav_dom_sf"/>
</dbReference>
<dbReference type="NCBIfam" id="TIGR01011">
    <property type="entry name" value="rpsB_bact"/>
    <property type="match status" value="1"/>
</dbReference>
<dbReference type="PANTHER" id="PTHR12534">
    <property type="entry name" value="30S RIBOSOMAL PROTEIN S2 PROKARYOTIC AND ORGANELLAR"/>
    <property type="match status" value="1"/>
</dbReference>
<dbReference type="PANTHER" id="PTHR12534:SF0">
    <property type="entry name" value="SMALL RIBOSOMAL SUBUNIT PROTEIN US2M"/>
    <property type="match status" value="1"/>
</dbReference>
<dbReference type="Pfam" id="PF00318">
    <property type="entry name" value="Ribosomal_S2"/>
    <property type="match status" value="1"/>
</dbReference>
<dbReference type="PRINTS" id="PR00395">
    <property type="entry name" value="RIBOSOMALS2"/>
</dbReference>
<dbReference type="SUPFAM" id="SSF52313">
    <property type="entry name" value="Ribosomal protein S2"/>
    <property type="match status" value="1"/>
</dbReference>
<dbReference type="PROSITE" id="PS00963">
    <property type="entry name" value="RIBOSOMAL_S2_2"/>
    <property type="match status" value="1"/>
</dbReference>